<accession>P18957</accession>
<reference key="1">
    <citation type="journal article" date="1989" name="Mol. Gen. Genet.">
        <title>The uvp1 gene of plasmid pR cooperates with mucAB genes in the DNA repair process.</title>
        <authorList>
            <person name="Gigliani F."/>
            <person name="Sporeno E."/>
            <person name="Perri S."/>
            <person name="Battaglia P.A."/>
        </authorList>
    </citation>
    <scope>NUCLEOTIDE SEQUENCE [GENOMIC DNA]</scope>
</reference>
<gene>
    <name type="primary">uvp1</name>
</gene>
<geneLocation type="plasmid">
    <name>pR</name>
</geneLocation>
<protein>
    <recommendedName>
        <fullName>Protein uvp1</fullName>
    </recommendedName>
</protein>
<organism>
    <name type="scientific">Escherichia coli</name>
    <dbReference type="NCBI Taxonomy" id="562"/>
    <lineage>
        <taxon>Bacteria</taxon>
        <taxon>Pseudomonadati</taxon>
        <taxon>Pseudomonadota</taxon>
        <taxon>Gammaproteobacteria</taxon>
        <taxon>Enterobacterales</taxon>
        <taxon>Enterobacteriaceae</taxon>
        <taxon>Escherichia</taxon>
    </lineage>
</organism>
<comment type="function">
    <text>Cooperates with the mucAB genes in the DNA repair process. Could be a resolvase-invertase protein.</text>
</comment>
<comment type="similarity">
    <text evidence="3">Belongs to the site-specific recombinase resolvase family.</text>
</comment>
<sequence length="198" mass="22127">MIIGYARKSTHLQDVTHQVDELTKAGCEQIYHEQISRGGSKRAKNGAPELENCLKALREGDTLVVWALDRLGGSLSQVITLLDDLKKRGITFIAIKDRIDTSAPVIGEIYTHLMAIFSNFERNRNIERTRSGLAAARARGRVGGRKPSLSEDDINEMKILLADPEMTVGAVAKRFNVSRMTIYRYTTKGNHSEKINDE</sequence>
<proteinExistence type="inferred from homology"/>
<keyword id="KW-0227">DNA damage</keyword>
<keyword id="KW-0229">DNA integration</keyword>
<keyword id="KW-0230">DNA invertase</keyword>
<keyword id="KW-0233">DNA recombination</keyword>
<keyword id="KW-0234">DNA repair</keyword>
<keyword id="KW-0238">DNA-binding</keyword>
<keyword id="KW-0614">Plasmid</keyword>
<feature type="chain" id="PRO_0000196385" description="Protein uvp1">
    <location>
        <begin position="1"/>
        <end position="198"/>
    </location>
</feature>
<feature type="domain" description="Resolvase/invertase-type recombinase catalytic" evidence="2">
    <location>
        <begin position="1"/>
        <end position="140"/>
    </location>
</feature>
<feature type="DNA-binding region" description="H-T-H motif" evidence="1">
    <location>
        <begin position="168"/>
        <end position="187"/>
    </location>
</feature>
<feature type="active site" description="O-(5'-phospho-DNA)-serine intermediate" evidence="2">
    <location>
        <position position="9"/>
    </location>
</feature>
<name>UVP1_ECOLX</name>
<dbReference type="EMBL" id="X16119">
    <property type="protein sequence ID" value="CAA34249.1"/>
    <property type="molecule type" value="Genomic_DNA"/>
</dbReference>
<dbReference type="PIR" id="S04903">
    <property type="entry name" value="S04903"/>
</dbReference>
<dbReference type="SMR" id="P18957"/>
<dbReference type="GO" id="GO:0003677">
    <property type="term" value="F:DNA binding"/>
    <property type="evidence" value="ECO:0007669"/>
    <property type="project" value="UniProtKB-KW"/>
</dbReference>
<dbReference type="GO" id="GO:0000150">
    <property type="term" value="F:DNA strand exchange activity"/>
    <property type="evidence" value="ECO:0007669"/>
    <property type="project" value="UniProtKB-KW"/>
</dbReference>
<dbReference type="GO" id="GO:0015074">
    <property type="term" value="P:DNA integration"/>
    <property type="evidence" value="ECO:0007669"/>
    <property type="project" value="UniProtKB-KW"/>
</dbReference>
<dbReference type="GO" id="GO:0006281">
    <property type="term" value="P:DNA repair"/>
    <property type="evidence" value="ECO:0007669"/>
    <property type="project" value="UniProtKB-KW"/>
</dbReference>
<dbReference type="CDD" id="cd00569">
    <property type="entry name" value="HTH_Hin_like"/>
    <property type="match status" value="1"/>
</dbReference>
<dbReference type="CDD" id="cd03768">
    <property type="entry name" value="SR_ResInv"/>
    <property type="match status" value="1"/>
</dbReference>
<dbReference type="Gene3D" id="1.10.10.60">
    <property type="entry name" value="Homeodomain-like"/>
    <property type="match status" value="1"/>
</dbReference>
<dbReference type="Gene3D" id="3.40.50.1390">
    <property type="entry name" value="Resolvase, N-terminal catalytic domain"/>
    <property type="match status" value="1"/>
</dbReference>
<dbReference type="InterPro" id="IPR009057">
    <property type="entry name" value="Homeodomain-like_sf"/>
</dbReference>
<dbReference type="InterPro" id="IPR006118">
    <property type="entry name" value="Recombinase_CS"/>
</dbReference>
<dbReference type="InterPro" id="IPR006119">
    <property type="entry name" value="Resolv_N"/>
</dbReference>
<dbReference type="InterPro" id="IPR036162">
    <property type="entry name" value="Resolvase-like_N_sf"/>
</dbReference>
<dbReference type="InterPro" id="IPR006120">
    <property type="entry name" value="Resolvase_HTH_dom"/>
</dbReference>
<dbReference type="InterPro" id="IPR050639">
    <property type="entry name" value="SSR_resolvase"/>
</dbReference>
<dbReference type="PANTHER" id="PTHR30461">
    <property type="entry name" value="DNA-INVERTASE FROM LAMBDOID PROPHAGE"/>
    <property type="match status" value="1"/>
</dbReference>
<dbReference type="PANTHER" id="PTHR30461:SF2">
    <property type="entry name" value="SERINE RECOMBINASE PINE-RELATED"/>
    <property type="match status" value="1"/>
</dbReference>
<dbReference type="Pfam" id="PF02796">
    <property type="entry name" value="HTH_7"/>
    <property type="match status" value="1"/>
</dbReference>
<dbReference type="Pfam" id="PF00239">
    <property type="entry name" value="Resolvase"/>
    <property type="match status" value="1"/>
</dbReference>
<dbReference type="SMART" id="SM00857">
    <property type="entry name" value="Resolvase"/>
    <property type="match status" value="1"/>
</dbReference>
<dbReference type="SUPFAM" id="SSF46689">
    <property type="entry name" value="Homeodomain-like"/>
    <property type="match status" value="1"/>
</dbReference>
<dbReference type="SUPFAM" id="SSF53041">
    <property type="entry name" value="Resolvase-like"/>
    <property type="match status" value="1"/>
</dbReference>
<dbReference type="PROSITE" id="PS00398">
    <property type="entry name" value="RECOMBINASES_2"/>
    <property type="match status" value="1"/>
</dbReference>
<dbReference type="PROSITE" id="PS51736">
    <property type="entry name" value="RECOMBINASES_3"/>
    <property type="match status" value="1"/>
</dbReference>
<evidence type="ECO:0000250" key="1"/>
<evidence type="ECO:0000255" key="2">
    <source>
        <dbReference type="PROSITE-ProRule" id="PRU01072"/>
    </source>
</evidence>
<evidence type="ECO:0000305" key="3"/>